<evidence type="ECO:0000250" key="1">
    <source>
        <dbReference type="UniProtKB" id="P27485"/>
    </source>
</evidence>
<evidence type="ECO:0000250" key="2">
    <source>
        <dbReference type="UniProtKB" id="Q00724"/>
    </source>
</evidence>
<evidence type="ECO:0000269" key="3">
    <source>
    </source>
</evidence>
<evidence type="ECO:0000269" key="4">
    <source>
    </source>
</evidence>
<evidence type="ECO:0000269" key="5">
    <source>
    </source>
</evidence>
<evidence type="ECO:0000269" key="6">
    <source>
    </source>
</evidence>
<evidence type="ECO:0000269" key="7">
    <source>
    </source>
</evidence>
<evidence type="ECO:0000269" key="8">
    <source>
    </source>
</evidence>
<evidence type="ECO:0000269" key="9">
    <source>
    </source>
</evidence>
<evidence type="ECO:0000269" key="10">
    <source>
    </source>
</evidence>
<evidence type="ECO:0000269" key="11">
    <source>
    </source>
</evidence>
<evidence type="ECO:0000269" key="12">
    <source>
    </source>
</evidence>
<evidence type="ECO:0000269" key="13">
    <source>
    </source>
</evidence>
<evidence type="ECO:0000269" key="14">
    <source>
    </source>
</evidence>
<evidence type="ECO:0000269" key="15">
    <source>
    </source>
</evidence>
<evidence type="ECO:0000269" key="16">
    <source>
    </source>
</evidence>
<evidence type="ECO:0000305" key="17"/>
<evidence type="ECO:0000305" key="18">
    <source>
    </source>
</evidence>
<evidence type="ECO:0007744" key="19">
    <source>
        <dbReference type="PDB" id="1QAB"/>
    </source>
</evidence>
<evidence type="ECO:0007744" key="20">
    <source>
        <dbReference type="PDB" id="1RLB"/>
    </source>
</evidence>
<evidence type="ECO:0007744" key="21">
    <source>
        <dbReference type="PDB" id="3BSZ"/>
    </source>
</evidence>
<evidence type="ECO:0007829" key="22">
    <source>
        <dbReference type="PDB" id="1BRP"/>
    </source>
</evidence>
<evidence type="ECO:0007829" key="23">
    <source>
        <dbReference type="PDB" id="1RLB"/>
    </source>
</evidence>
<evidence type="ECO:0007829" key="24">
    <source>
        <dbReference type="PDB" id="5NU2"/>
    </source>
</evidence>
<evidence type="ECO:0007829" key="25">
    <source>
        <dbReference type="PDB" id="5NU7"/>
    </source>
</evidence>
<evidence type="ECO:0007829" key="26">
    <source>
        <dbReference type="PDB" id="6QBA"/>
    </source>
</evidence>
<accession>P02753</accession>
<accession>D3DR38</accession>
<accession>O43478</accession>
<accession>O43479</accession>
<accession>Q5VY24</accession>
<accession>Q8WWA3</accession>
<accession>Q9P178</accession>
<reference key="1">
    <citation type="journal article" date="1983" name="Nucleic Acids Res.">
        <title>Cloning and sequencing of a full length cDNA coding for human retinol-binding protein.</title>
        <authorList>
            <person name="Colantuoni V."/>
            <person name="Romano V."/>
            <person name="Bensi G."/>
            <person name="Santoro C."/>
            <person name="Costanzo F."/>
            <person name="Raugei G."/>
            <person name="Cortese R."/>
        </authorList>
    </citation>
    <scope>NUCLEOTIDE SEQUENCE [MRNA]</scope>
</reference>
<reference key="2">
    <citation type="journal article" date="2004" name="Nature">
        <title>The DNA sequence and comparative analysis of human chromosome 10.</title>
        <authorList>
            <person name="Deloukas P."/>
            <person name="Earthrowl M.E."/>
            <person name="Grafham D.V."/>
            <person name="Rubenfield M."/>
            <person name="French L."/>
            <person name="Steward C.A."/>
            <person name="Sims S.K."/>
            <person name="Jones M.C."/>
            <person name="Searle S."/>
            <person name="Scott C."/>
            <person name="Howe K."/>
            <person name="Hunt S.E."/>
            <person name="Andrews T.D."/>
            <person name="Gilbert J.G.R."/>
            <person name="Swarbreck D."/>
            <person name="Ashurst J.L."/>
            <person name="Taylor A."/>
            <person name="Battles J."/>
            <person name="Bird C.P."/>
            <person name="Ainscough R."/>
            <person name="Almeida J.P."/>
            <person name="Ashwell R.I.S."/>
            <person name="Ambrose K.D."/>
            <person name="Babbage A.K."/>
            <person name="Bagguley C.L."/>
            <person name="Bailey J."/>
            <person name="Banerjee R."/>
            <person name="Bates K."/>
            <person name="Beasley H."/>
            <person name="Bray-Allen S."/>
            <person name="Brown A.J."/>
            <person name="Brown J.Y."/>
            <person name="Burford D.C."/>
            <person name="Burrill W."/>
            <person name="Burton J."/>
            <person name="Cahill P."/>
            <person name="Camire D."/>
            <person name="Carter N.P."/>
            <person name="Chapman J.C."/>
            <person name="Clark S.Y."/>
            <person name="Clarke G."/>
            <person name="Clee C.M."/>
            <person name="Clegg S."/>
            <person name="Corby N."/>
            <person name="Coulson A."/>
            <person name="Dhami P."/>
            <person name="Dutta I."/>
            <person name="Dunn M."/>
            <person name="Faulkner L."/>
            <person name="Frankish A."/>
            <person name="Frankland J.A."/>
            <person name="Garner P."/>
            <person name="Garnett J."/>
            <person name="Gribble S."/>
            <person name="Griffiths C."/>
            <person name="Grocock R."/>
            <person name="Gustafson E."/>
            <person name="Hammond S."/>
            <person name="Harley J.L."/>
            <person name="Hart E."/>
            <person name="Heath P.D."/>
            <person name="Ho T.P."/>
            <person name="Hopkins B."/>
            <person name="Horne J."/>
            <person name="Howden P.J."/>
            <person name="Huckle E."/>
            <person name="Hynds C."/>
            <person name="Johnson C."/>
            <person name="Johnson D."/>
            <person name="Kana A."/>
            <person name="Kay M."/>
            <person name="Kimberley A.M."/>
            <person name="Kershaw J.K."/>
            <person name="Kokkinaki M."/>
            <person name="Laird G.K."/>
            <person name="Lawlor S."/>
            <person name="Lee H.M."/>
            <person name="Leongamornlert D.A."/>
            <person name="Laird G."/>
            <person name="Lloyd C."/>
            <person name="Lloyd D.M."/>
            <person name="Loveland J."/>
            <person name="Lovell J."/>
            <person name="McLaren S."/>
            <person name="McLay K.E."/>
            <person name="McMurray A."/>
            <person name="Mashreghi-Mohammadi M."/>
            <person name="Matthews L."/>
            <person name="Milne S."/>
            <person name="Nickerson T."/>
            <person name="Nguyen M."/>
            <person name="Overton-Larty E."/>
            <person name="Palmer S.A."/>
            <person name="Pearce A.V."/>
            <person name="Peck A.I."/>
            <person name="Pelan S."/>
            <person name="Phillimore B."/>
            <person name="Porter K."/>
            <person name="Rice C.M."/>
            <person name="Rogosin A."/>
            <person name="Ross M.T."/>
            <person name="Sarafidou T."/>
            <person name="Sehra H.K."/>
            <person name="Shownkeen R."/>
            <person name="Skuce C.D."/>
            <person name="Smith M."/>
            <person name="Standring L."/>
            <person name="Sycamore N."/>
            <person name="Tester J."/>
            <person name="Thorpe A."/>
            <person name="Torcasso W."/>
            <person name="Tracey A."/>
            <person name="Tromans A."/>
            <person name="Tsolas J."/>
            <person name="Wall M."/>
            <person name="Walsh J."/>
            <person name="Wang H."/>
            <person name="Weinstock K."/>
            <person name="West A.P."/>
            <person name="Willey D.L."/>
            <person name="Whitehead S.L."/>
            <person name="Wilming L."/>
            <person name="Wray P.W."/>
            <person name="Young L."/>
            <person name="Chen Y."/>
            <person name="Lovering R.C."/>
            <person name="Moschonas N.K."/>
            <person name="Siebert R."/>
            <person name="Fechtel K."/>
            <person name="Bentley D."/>
            <person name="Durbin R.M."/>
            <person name="Hubbard T."/>
            <person name="Doucette-Stamm L."/>
            <person name="Beck S."/>
            <person name="Smith D.R."/>
            <person name="Rogers J."/>
        </authorList>
    </citation>
    <scope>NUCLEOTIDE SEQUENCE [LARGE SCALE GENOMIC DNA]</scope>
</reference>
<reference key="3">
    <citation type="submission" date="2005-09" db="EMBL/GenBank/DDBJ databases">
        <authorList>
            <person name="Mural R.J."/>
            <person name="Istrail S."/>
            <person name="Sutton G.G."/>
            <person name="Florea L."/>
            <person name="Halpern A.L."/>
            <person name="Mobarry C.M."/>
            <person name="Lippert R."/>
            <person name="Walenz B."/>
            <person name="Shatkay H."/>
            <person name="Dew I."/>
            <person name="Miller J.R."/>
            <person name="Flanigan M.J."/>
            <person name="Edwards N.J."/>
            <person name="Bolanos R."/>
            <person name="Fasulo D."/>
            <person name="Halldorsson B.V."/>
            <person name="Hannenhalli S."/>
            <person name="Turner R."/>
            <person name="Yooseph S."/>
            <person name="Lu F."/>
            <person name="Nusskern D.R."/>
            <person name="Shue B.C."/>
            <person name="Zheng X.H."/>
            <person name="Zhong F."/>
            <person name="Delcher A.L."/>
            <person name="Huson D.H."/>
            <person name="Kravitz S.A."/>
            <person name="Mouchard L."/>
            <person name="Reinert K."/>
            <person name="Remington K.A."/>
            <person name="Clark A.G."/>
            <person name="Waterman M.S."/>
            <person name="Eichler E.E."/>
            <person name="Adams M.D."/>
            <person name="Hunkapiller M.W."/>
            <person name="Myers E.W."/>
            <person name="Venter J.C."/>
        </authorList>
    </citation>
    <scope>NUCLEOTIDE SEQUENCE [LARGE SCALE GENOMIC DNA]</scope>
</reference>
<reference key="4">
    <citation type="journal article" date="2004" name="Genome Res.">
        <title>The status, quality, and expansion of the NIH full-length cDNA project: the Mammalian Gene Collection (MGC).</title>
        <authorList>
            <consortium name="The MGC Project Team"/>
        </authorList>
    </citation>
    <scope>NUCLEOTIDE SEQUENCE [LARGE SCALE MRNA]</scope>
    <source>
        <tissue>Liver</tissue>
    </source>
</reference>
<reference key="5">
    <citation type="journal article" date="1985" name="EMBO J.">
        <title>Structure and cell-specific expression of a cloned human retinol binding protein gene: the 5'-flanking region contains hepatoma specific transcriptional signals.</title>
        <authorList>
            <person name="D'Onofrio C."/>
            <person name="Colantuoni V."/>
            <person name="Cortese R."/>
        </authorList>
    </citation>
    <scope>NUCLEOTIDE SEQUENCE [GENOMIC DNA] OF 1-189</scope>
</reference>
<reference key="6">
    <citation type="journal article" date="1987" name="Ups. J. Med. Sci.">
        <title>The complete amino acid sequence of human serum retinol-binding protein.</title>
        <authorList>
            <person name="Rask L."/>
            <person name="Anundi H."/>
            <person name="Fohlman J."/>
            <person name="Peterson P.A."/>
        </authorList>
    </citation>
    <scope>PROTEIN SEQUENCE OF 19-201</scope>
    <scope>SUBCELLULAR LOCATION</scope>
    <scope>TISSUE SPECIFICITY</scope>
    <scope>DISULFIDE BONDS</scope>
</reference>
<reference key="7">
    <citation type="journal article" date="1981" name="Ann. N. Y. Acad. Sci.">
        <title>Structural and functional studies of vitamin A-binding proteins.</title>
        <authorList>
            <person name="Rask L."/>
            <person name="Anundi H."/>
            <person name="Boehme J."/>
            <person name="Eriksson U."/>
            <person name="Ronne H."/>
            <person name="Sege K."/>
            <person name="Peterson P.A."/>
        </authorList>
    </citation>
    <scope>PROTEIN SEQUENCE OF 19-201</scope>
</reference>
<reference key="8">
    <citation type="journal article" date="1979" name="FEBS Lett.">
        <title>The primary structure of the human retinol-binding protein.</title>
        <authorList>
            <person name="Rask L."/>
            <person name="Anundi H."/>
            <person name="Peterson P.A."/>
        </authorList>
    </citation>
    <scope>PROTEIN SEQUENCE OF 19-183</scope>
</reference>
<reference key="9">
    <citation type="submission" date="1999-01" db="EMBL/GenBank/DDBJ databases">
        <title>Functional prediction of the coding sequences of 79 new genes deduced by analysis of cDNA clones from human fetal liver.</title>
        <authorList>
            <person name="Zhang C."/>
            <person name="Yu Y."/>
            <person name="Zhang S."/>
            <person name="Wei H."/>
            <person name="Zhang Y."/>
            <person name="Zhou G."/>
            <person name="Bi J."/>
            <person name="Liu M."/>
            <person name="He F."/>
        </authorList>
    </citation>
    <scope>NUCLEOTIDE SEQUENCE [LARGE SCALE MRNA] OF 18-201</scope>
    <source>
        <tissue>Fetal liver</tissue>
    </source>
</reference>
<reference key="10">
    <citation type="journal article" date="1995" name="J. Lipid Res.">
        <title>Characterization of two post-translationally processed forms of human serum retinol-binding protein: altered ratios in chronic renal failure.</title>
        <authorList>
            <person name="Jaconi S."/>
            <person name="Rose K."/>
            <person name="Hughes G.J."/>
            <person name="Saurat J.-H."/>
            <person name="Siegenthaler G."/>
        </authorList>
    </citation>
    <scope>PARTIAL PROTEIN SEQUENCE</scope>
    <scope>MASS SPECTROMETRY</scope>
</reference>
<reference key="11">
    <citation type="journal article" date="1971" name="J. Biol. Chem.">
        <title>Studies on the interaction between prealbumin, retinol-binding protein, and vitamin A.</title>
        <authorList>
            <person name="Peterson P.A."/>
        </authorList>
    </citation>
    <scope>SUBCELLULAR LOCATION</scope>
    <scope>FUNCTION</scope>
    <scope>TISSUE SPECIFICITY</scope>
    <scope>INTERACTION WITH TTR</scope>
</reference>
<reference key="12">
    <citation type="journal article" date="2002" name="Biochem. Biophys. Res. Commun.">
        <title>Comparative phenotypic analyses of human plasma and urinary retinol binding protein using mass spectrometric immunoassay.</title>
        <authorList>
            <person name="Kiernan U.A."/>
            <person name="Tubbs K.A."/>
            <person name="Nedelkov D."/>
            <person name="Niederkofler E.E."/>
            <person name="Nelson R.W."/>
        </authorList>
    </citation>
    <scope>MASS SPECTROMETRY</scope>
    <scope>SUBCELLULAR LOCATION</scope>
</reference>
<reference key="13">
    <citation type="journal article" date="2003" name="J. Proteome Res.">
        <title>Comparative urine protein phenotyping using mass spectrometric immunoassay.</title>
        <authorList>
            <person name="Kiernan U.A."/>
            <person name="Tubbs K.A."/>
            <person name="Nedelkov D."/>
            <person name="Niederkofler E.E."/>
            <person name="McConnell E."/>
            <person name="Nelson R.W."/>
        </authorList>
    </citation>
    <scope>IDENTIFICATION BY MASS SPECTROMETRY</scope>
</reference>
<reference key="14">
    <citation type="journal article" date="2011" name="BMC Syst. Biol.">
        <title>Initial characterization of the human central proteome.</title>
        <authorList>
            <person name="Burkard T.R."/>
            <person name="Planyavsky M."/>
            <person name="Kaupe I."/>
            <person name="Breitwieser F.P."/>
            <person name="Buerckstuemmer T."/>
            <person name="Bennett K.L."/>
            <person name="Superti-Furga G."/>
            <person name="Colinge J."/>
        </authorList>
    </citation>
    <scope>IDENTIFICATION BY MASS SPECTROMETRY [LARGE SCALE ANALYSIS]</scope>
</reference>
<reference key="15">
    <citation type="journal article" date="2012" name="Mol. Cell. Biol.">
        <title>Cross talk between signaling and vitamin A transport by the retinol-binding protein receptor STRA6.</title>
        <authorList>
            <person name="Berry D.C."/>
            <person name="O'Byrne S.M."/>
            <person name="Vreeland A.C."/>
            <person name="Blaner W.S."/>
            <person name="Noy N."/>
        </authorList>
    </citation>
    <scope>INTERACTION WITH STRA6</scope>
    <scope>FUNCTION</scope>
</reference>
<reference key="16">
    <citation type="journal article" date="2012" name="PLoS ONE">
        <title>Exome analysis identified a novel mutation in the RBP4 gene in a consanguineous pedigree with retinal dystrophy and developmental abnormalities.</title>
        <authorList>
            <person name="Cukras C."/>
            <person name="Gaasterland T."/>
            <person name="Lee P."/>
            <person name="Gudiseva H.V."/>
            <person name="Chavali V.R."/>
            <person name="Pullakhandam R."/>
            <person name="Maranhao B."/>
            <person name="Edsall L."/>
            <person name="Soares S."/>
            <person name="Reddy G.B."/>
            <person name="Sieving P.A."/>
            <person name="Ayyagari R."/>
        </authorList>
    </citation>
    <scope>INVOLVEMENT IN RDCCAS</scope>
</reference>
<reference key="17">
    <citation type="journal article" date="2014" name="J. Proteomics">
        <title>An enzyme assisted RP-RPLC approach for in-depth analysis of human liver phosphoproteome.</title>
        <authorList>
            <person name="Bian Y."/>
            <person name="Song C."/>
            <person name="Cheng K."/>
            <person name="Dong M."/>
            <person name="Wang F."/>
            <person name="Huang J."/>
            <person name="Sun D."/>
            <person name="Wang L."/>
            <person name="Ye M."/>
            <person name="Zou H."/>
        </authorList>
    </citation>
    <scope>IDENTIFICATION BY MASS SPECTROMETRY [LARGE SCALE ANALYSIS]</scope>
    <source>
        <tissue>Liver</tissue>
    </source>
</reference>
<reference key="18">
    <citation type="journal article" date="2015" name="Cell">
        <title>Biochemical basis for dominant inheritance, variable penetrance, and maternal effects in RBP4 congenital eye disease.</title>
        <authorList>
            <person name="Chou C.M."/>
            <person name="Nelson C."/>
            <person name="Tarle S.A."/>
            <person name="Pribila J.T."/>
            <person name="Bardakjian T."/>
            <person name="Woods S."/>
            <person name="Schneider A."/>
            <person name="Glaser T."/>
        </authorList>
    </citation>
    <scope>INVOLVEMENT IN MCOPCB10</scope>
    <scope>VARIANTS MCOPCB10 THR-73 AND THR-75</scope>
    <scope>CHARACTERIZATION OF VARIANTS MCOPCB10 THR-73 AND THR-75</scope>
    <scope>INTERACTION WITH STRA6</scope>
</reference>
<reference key="19">
    <citation type="journal article" date="1984" name="EMBO J.">
        <title>The three-dimensional structure of retinol-binding protein.</title>
        <authorList>
            <person name="Newcomer M.E."/>
            <person name="Jones T.A."/>
            <person name="Aqvist J."/>
            <person name="Sundelin J."/>
            <person name="Eriksson U."/>
            <person name="Rask L."/>
            <person name="Peterson P.A."/>
        </authorList>
    </citation>
    <scope>X-RAY CRYSTALLOGRAPHY (3.1 ANGSTROMS)</scope>
</reference>
<reference key="20">
    <citation type="journal article" date="1990" name="Proteins">
        <title>Crystallographic refinement of human serum retinol binding protein at 2-A resolution.</title>
        <authorList>
            <person name="Cowan S.W."/>
            <person name="Newcomer M.E."/>
            <person name="Jones T.A."/>
        </authorList>
    </citation>
    <scope>X-RAY CRYSTALLOGRAPHY (2.0 ANGSTROMS)</scope>
</reference>
<reference key="21">
    <citation type="journal article" date="1992" name="Biopolymers">
        <title>Three-dimensional structure and active site of three hydrophobic molecule-binding proteins with significant amino acid sequence similarity.</title>
        <authorList>
            <person name="Monaco H.L."/>
            <person name="Zanotti G."/>
        </authorList>
    </citation>
    <scope>COMPARISON OF X-RAY STRUCTURES</scope>
</reference>
<reference evidence="20" key="22">
    <citation type="journal article" date="1995" name="Science">
        <title>Structure of a complex of two plasma proteins: transthyretin and retinol-binding protein.</title>
        <authorList>
            <person name="Monaco H.L."/>
            <person name="Rizzi M."/>
            <person name="Coda A."/>
        </authorList>
    </citation>
    <scope>X-RAY CRYSTALLOGRAPHY (3.10 ANGSTROMS) OF 19-192 IN COMPLEX WITH TTR</scope>
    <scope>INTERACTION WITH TTR</scope>
    <scope>DISULFIDE BONDS</scope>
</reference>
<reference evidence="19" key="23">
    <citation type="journal article" date="1999" name="Biochemistry">
        <title>The structure of human retinol-binding protein (RBP) with its carrier protein transthyretin reveals an interaction with the carboxy terminus of RBP.</title>
        <authorList>
            <person name="Naylor H.M."/>
            <person name="Newcomer M.E."/>
        </authorList>
    </citation>
    <scope>X-RAY CRYSTALLOGRAPHY (3.20 ANGSTROMS) OF 22-201 IN COMPLEX WITH TTR AND 13-CIS-RETINOL</scope>
    <scope>DISULFIDE BONDS</scope>
</reference>
<reference evidence="21" key="24">
    <citation type="journal article" date="2008" name="FEBS J.">
        <title>Structural and mutational analyses of protein-protein interactions between transthyretin and retinol-binding protein.</title>
        <authorList>
            <person name="Zanotti G."/>
            <person name="Folli C."/>
            <person name="Cendron L."/>
            <person name="Alfieri B."/>
            <person name="Nishida S.K."/>
            <person name="Gliubich F."/>
            <person name="Pasquato N."/>
            <person name="Negro A."/>
            <person name="Berni R."/>
        </authorList>
    </citation>
    <scope>X-RAY CRYSTALLOGRAPHY (3.38 ANGSTROMS) OF 19-194 IN COMPLEX WITH TTR AND 13-CIS-RETINOL</scope>
    <scope>INTERACTION WITH TTR</scope>
    <scope>DISULFIDE BONDS</scope>
</reference>
<reference key="25">
    <citation type="journal article" date="1999" name="Invest. Ophthalmol. Vis. Sci.">
        <title>Phenotype in retinol deficiency due to a hereditary defect in retinol binding protein synthesis.</title>
        <authorList>
            <person name="Seeliger M.W."/>
            <person name="Biesalski H.K."/>
            <person name="Wissinger B."/>
            <person name="Gollnick H."/>
            <person name="Gielen S."/>
            <person name="Frank J."/>
            <person name="Beck S.C."/>
            <person name="Zrenner E."/>
        </authorList>
    </citation>
    <scope>VARIANTS RDCCAS ASN-59 AND ASP-93</scope>
</reference>
<reference key="26">
    <citation type="journal article" date="1999" name="Am. J. Clin. Nutr.">
        <title>Biochemical but not clinical vitamin A deficiency results from mutations in the gene for retinol binding protein.</title>
        <authorList>
            <person name="Biesalski H.K."/>
            <person name="Frank J."/>
            <person name="Beck S.C."/>
            <person name="Heinrich F."/>
            <person name="Illek B."/>
            <person name="Reifen R."/>
            <person name="Gollnick H."/>
            <person name="Seeliger M.W."/>
            <person name="Wissinger B."/>
            <person name="Zrenner E."/>
        </authorList>
    </citation>
    <scope>CHARACTERIZATION OF VARIANTS RDCCAS ASN-59 AND ASP-93</scope>
</reference>
<sequence>MKWVWALLLLAALGSGRAERDCRVSSFRVKENFDKARFSGTWYAMAKKDPEGLFLQDNIVAEFSVDETGQMSATAKGRVRLLNNWDVCADMVGTFTDTEDPAKFKMKYWGVASFLQKGNDDHWIVDTDYDTYAVQYSCRLLNLDGTCADSYSFVFSRDPNGLPPEAQKIVRQRQEELCLARQYRLIVHNGYCDGRSERNLL</sequence>
<feature type="signal peptide" evidence="9 12 13">
    <location>
        <begin position="1"/>
        <end position="18"/>
    </location>
</feature>
<feature type="chain" id="PRO_0000017961" description="Retinol-binding protein 4">
    <location>
        <begin position="19"/>
        <end position="201"/>
    </location>
</feature>
<feature type="chain" id="PRO_0000017962" description="Plasma retinol-binding protein(1-182)">
    <location>
        <begin position="19"/>
        <end position="200"/>
    </location>
</feature>
<feature type="chain" id="PRO_0000017963" description="Plasma retinol-binding protein(1-181)">
    <location>
        <begin position="19"/>
        <end position="199"/>
    </location>
</feature>
<feature type="chain" id="PRO_0000017964" description="Plasma retinol-binding protein(1-179)">
    <location>
        <begin position="19"/>
        <end position="197"/>
    </location>
</feature>
<feature type="chain" id="PRO_0000017965" description="Plasma retinol-binding protein(1-176)">
    <location>
        <begin position="19"/>
        <end position="194"/>
    </location>
</feature>
<feature type="binding site" evidence="1">
    <location>
        <position position="116"/>
    </location>
    <ligand>
        <name>substrate</name>
    </ligand>
</feature>
<feature type="modified residue" description="Omega-N-methylarginine" evidence="2">
    <location>
        <position position="139"/>
    </location>
</feature>
<feature type="disulfide bond" evidence="9">
    <location>
        <begin position="22"/>
        <end position="178"/>
    </location>
</feature>
<feature type="disulfide bond" evidence="9">
    <location>
        <begin position="88"/>
        <end position="192"/>
    </location>
</feature>
<feature type="disulfide bond" evidence="9">
    <location>
        <begin position="138"/>
        <end position="147"/>
    </location>
</feature>
<feature type="sequence variant" id="VAR_009276" description="In RDCCAS; dbSNP:rs121918584." evidence="4 16">
    <original>I</original>
    <variation>N</variation>
    <location>
        <position position="59"/>
    </location>
</feature>
<feature type="sequence variant" id="VAR_073856" description="In MCOPCB10; dramatic reduction in retinol binding; has greater affinity for the STRA6 receptor; dbSNP:rs794726862." evidence="10">
    <original>A</original>
    <variation>T</variation>
    <location>
        <position position="73"/>
    </location>
</feature>
<feature type="sequence variant" id="VAR_073857" description="In MCOPCB10; dramatic reduction in retinol binding; has greater affinity for the STRA6 receptor; dbSNP:rs794726861." evidence="10">
    <original>A</original>
    <variation>T</variation>
    <location>
        <position position="75"/>
    </location>
</feature>
<feature type="sequence variant" id="VAR_009277" description="In RDCCAS; dbSNP:rs121918585." evidence="4 16">
    <original>G</original>
    <variation>D</variation>
    <location>
        <position position="93"/>
    </location>
</feature>
<feature type="sequence conflict" description="In Ref. 4; AAH20633." evidence="17" ref="4">
    <original>L</original>
    <variation>F</variation>
    <location>
        <position position="8"/>
    </location>
</feature>
<feature type="sequence conflict" description="In Ref. 1; CAA24959 and 5; CAA26553." evidence="17" ref="1 5">
    <original>LGSGR</original>
    <variation>WAA</variation>
    <location>
        <begin position="13"/>
        <end position="17"/>
    </location>
</feature>
<feature type="helix" evidence="24">
    <location>
        <begin position="24"/>
        <end position="26"/>
    </location>
</feature>
<feature type="helix" evidence="24">
    <location>
        <begin position="35"/>
        <end position="38"/>
    </location>
</feature>
<feature type="strand" evidence="24">
    <location>
        <begin position="40"/>
        <end position="48"/>
    </location>
</feature>
<feature type="strand" evidence="25">
    <location>
        <begin position="51"/>
        <end position="53"/>
    </location>
</feature>
<feature type="strand" evidence="24">
    <location>
        <begin position="55"/>
        <end position="65"/>
    </location>
</feature>
<feature type="strand" evidence="23">
    <location>
        <begin position="67"/>
        <end position="69"/>
    </location>
</feature>
<feature type="strand" evidence="24">
    <location>
        <begin position="71"/>
        <end position="81"/>
    </location>
</feature>
<feature type="turn" evidence="24">
    <location>
        <begin position="82"/>
        <end position="84"/>
    </location>
</feature>
<feature type="strand" evidence="24">
    <location>
        <begin position="85"/>
        <end position="97"/>
    </location>
</feature>
<feature type="strand" evidence="24">
    <location>
        <begin position="103"/>
        <end position="112"/>
    </location>
</feature>
<feature type="strand" evidence="24">
    <location>
        <begin position="118"/>
        <end position="127"/>
    </location>
</feature>
<feature type="strand" evidence="24">
    <location>
        <begin position="129"/>
        <end position="141"/>
    </location>
</feature>
<feature type="strand" evidence="24">
    <location>
        <begin position="145"/>
        <end position="158"/>
    </location>
</feature>
<feature type="helix" evidence="24">
    <location>
        <begin position="164"/>
        <end position="176"/>
    </location>
</feature>
<feature type="turn" evidence="22">
    <location>
        <begin position="180"/>
        <end position="182"/>
    </location>
</feature>
<feature type="turn" evidence="26">
    <location>
        <begin position="191"/>
        <end position="193"/>
    </location>
</feature>
<protein>
    <recommendedName>
        <fullName>Retinol-binding protein 4</fullName>
    </recommendedName>
    <alternativeName>
        <fullName>Plasma retinol-binding protein</fullName>
        <shortName>PRBP</shortName>
        <shortName>RBP</shortName>
    </alternativeName>
    <component>
        <recommendedName>
            <fullName>Plasma retinol-binding protein(1-182)</fullName>
        </recommendedName>
    </component>
    <component>
        <recommendedName>
            <fullName>Plasma retinol-binding protein(1-181)</fullName>
        </recommendedName>
    </component>
    <component>
        <recommendedName>
            <fullName>Plasma retinol-binding protein(1-179)</fullName>
        </recommendedName>
    </component>
    <component>
        <recommendedName>
            <fullName>Plasma retinol-binding protein(1-176)</fullName>
        </recommendedName>
    </component>
</protein>
<name>RET4_HUMAN</name>
<dbReference type="EMBL" id="X00129">
    <property type="protein sequence ID" value="CAA24959.1"/>
    <property type="molecule type" value="mRNA"/>
</dbReference>
<dbReference type="EMBL" id="AL356214">
    <property type="status" value="NOT_ANNOTATED_CDS"/>
    <property type="molecule type" value="Genomic_DNA"/>
</dbReference>
<dbReference type="EMBL" id="CH471066">
    <property type="protein sequence ID" value="EAW50065.1"/>
    <property type="molecule type" value="Genomic_DNA"/>
</dbReference>
<dbReference type="EMBL" id="CH471066">
    <property type="protein sequence ID" value="EAW50066.1"/>
    <property type="molecule type" value="Genomic_DNA"/>
</dbReference>
<dbReference type="EMBL" id="CH471066">
    <property type="protein sequence ID" value="EAW50067.1"/>
    <property type="molecule type" value="Genomic_DNA"/>
</dbReference>
<dbReference type="EMBL" id="BC020633">
    <property type="protein sequence ID" value="AAH20633.1"/>
    <property type="molecule type" value="mRNA"/>
</dbReference>
<dbReference type="EMBL" id="X02775">
    <property type="protein sequence ID" value="CAA26553.1"/>
    <property type="molecule type" value="Genomic_DNA"/>
</dbReference>
<dbReference type="EMBL" id="X02824">
    <property type="protein sequence ID" value="CAB46489.1"/>
    <property type="molecule type" value="Genomic_DNA"/>
</dbReference>
<dbReference type="EMBL" id="AF119868">
    <property type="protein sequence ID" value="AAF69622.1"/>
    <property type="status" value="ALT_INIT"/>
    <property type="molecule type" value="mRNA"/>
</dbReference>
<dbReference type="EMBL" id="AF025334">
    <property type="protein sequence ID" value="AAC02945.1"/>
    <property type="molecule type" value="Genomic_DNA"/>
</dbReference>
<dbReference type="EMBL" id="AF025335">
    <property type="protein sequence ID" value="AAC02946.1"/>
    <property type="molecule type" value="Genomic_DNA"/>
</dbReference>
<dbReference type="CCDS" id="CCDS31249.1"/>
<dbReference type="PIR" id="A93494">
    <property type="entry name" value="VAHU"/>
</dbReference>
<dbReference type="RefSeq" id="NP_001310446.1">
    <property type="nucleotide sequence ID" value="NM_001323517.1"/>
</dbReference>
<dbReference type="RefSeq" id="NP_001310447.1">
    <property type="nucleotide sequence ID" value="NM_001323518.1"/>
</dbReference>
<dbReference type="RefSeq" id="NP_006735.2">
    <property type="nucleotide sequence ID" value="NM_006744.4"/>
</dbReference>
<dbReference type="PDB" id="1BRP">
    <property type="method" value="X-ray"/>
    <property type="resolution" value="2.50 A"/>
    <property type="chains" value="A=19-200"/>
</dbReference>
<dbReference type="PDB" id="1BRQ">
    <property type="method" value="X-ray"/>
    <property type="resolution" value="2.50 A"/>
    <property type="chains" value="A=19-200"/>
</dbReference>
<dbReference type="PDB" id="1JYD">
    <property type="method" value="X-ray"/>
    <property type="resolution" value="1.70 A"/>
    <property type="chains" value="A=19-200"/>
</dbReference>
<dbReference type="PDB" id="1JYJ">
    <property type="method" value="X-ray"/>
    <property type="resolution" value="2.00 A"/>
    <property type="chains" value="A=19-200"/>
</dbReference>
<dbReference type="PDB" id="1QAB">
    <property type="method" value="X-ray"/>
    <property type="resolution" value="3.20 A"/>
    <property type="chains" value="E/F=22-201"/>
</dbReference>
<dbReference type="PDB" id="1RBP">
    <property type="method" value="X-ray"/>
    <property type="resolution" value="2.00 A"/>
    <property type="chains" value="A=19-200"/>
</dbReference>
<dbReference type="PDB" id="1RLB">
    <property type="method" value="X-ray"/>
    <property type="resolution" value="3.10 A"/>
    <property type="chains" value="E/F=19-192"/>
</dbReference>
<dbReference type="PDB" id="2WQ9">
    <property type="method" value="X-ray"/>
    <property type="resolution" value="1.65 A"/>
    <property type="chains" value="A=19-192"/>
</dbReference>
<dbReference type="PDB" id="2WQA">
    <property type="method" value="X-ray"/>
    <property type="resolution" value="2.85 A"/>
    <property type="chains" value="E/F=19-194"/>
</dbReference>
<dbReference type="PDB" id="2WR6">
    <property type="method" value="X-ray"/>
    <property type="resolution" value="1.80 A"/>
    <property type="chains" value="A=19-192"/>
</dbReference>
<dbReference type="PDB" id="3BSZ">
    <property type="method" value="X-ray"/>
    <property type="resolution" value="3.38 A"/>
    <property type="chains" value="E/F=19-194"/>
</dbReference>
<dbReference type="PDB" id="3FMZ">
    <property type="method" value="X-ray"/>
    <property type="resolution" value="2.90 A"/>
    <property type="chains" value="A/B=19-201"/>
</dbReference>
<dbReference type="PDB" id="4O9S">
    <property type="method" value="X-ray"/>
    <property type="resolution" value="2.30 A"/>
    <property type="chains" value="A/B=19-201"/>
</dbReference>
<dbReference type="PDB" id="4PSQ">
    <property type="method" value="X-ray"/>
    <property type="resolution" value="2.40 A"/>
    <property type="chains" value="A/B=19-201"/>
</dbReference>
<dbReference type="PDB" id="5NTY">
    <property type="method" value="X-ray"/>
    <property type="resolution" value="2.00 A"/>
    <property type="chains" value="A=19-200"/>
</dbReference>
<dbReference type="PDB" id="5NU2">
    <property type="method" value="X-ray"/>
    <property type="resolution" value="1.50 A"/>
    <property type="chains" value="A=19-200"/>
</dbReference>
<dbReference type="PDB" id="5NU6">
    <property type="method" value="X-ray"/>
    <property type="resolution" value="1.68 A"/>
    <property type="chains" value="A=19-200"/>
</dbReference>
<dbReference type="PDB" id="5NU7">
    <property type="method" value="X-ray"/>
    <property type="resolution" value="1.50 A"/>
    <property type="chains" value="A=19-200"/>
</dbReference>
<dbReference type="PDB" id="5NU8">
    <property type="method" value="X-ray"/>
    <property type="resolution" value="1.59 A"/>
    <property type="chains" value="A=19-200"/>
</dbReference>
<dbReference type="PDB" id="5NU9">
    <property type="method" value="X-ray"/>
    <property type="resolution" value="1.50 A"/>
    <property type="chains" value="A=19-200"/>
</dbReference>
<dbReference type="PDB" id="5NUA">
    <property type="method" value="X-ray"/>
    <property type="resolution" value="1.60 A"/>
    <property type="chains" value="A=19-200"/>
</dbReference>
<dbReference type="PDB" id="5NUB">
    <property type="method" value="X-ray"/>
    <property type="resolution" value="1.60 A"/>
    <property type="chains" value="A=19-200"/>
</dbReference>
<dbReference type="PDB" id="6QBA">
    <property type="method" value="X-ray"/>
    <property type="resolution" value="1.80 A"/>
    <property type="chains" value="A=19-201"/>
</dbReference>
<dbReference type="PDBsum" id="1BRP"/>
<dbReference type="PDBsum" id="1BRQ"/>
<dbReference type="PDBsum" id="1JYD"/>
<dbReference type="PDBsum" id="1JYJ"/>
<dbReference type="PDBsum" id="1QAB"/>
<dbReference type="PDBsum" id="1RBP"/>
<dbReference type="PDBsum" id="1RLB"/>
<dbReference type="PDBsum" id="2WQ9"/>
<dbReference type="PDBsum" id="2WQA"/>
<dbReference type="PDBsum" id="2WR6"/>
<dbReference type="PDBsum" id="3BSZ"/>
<dbReference type="PDBsum" id="3FMZ"/>
<dbReference type="PDBsum" id="4O9S"/>
<dbReference type="PDBsum" id="4PSQ"/>
<dbReference type="PDBsum" id="5NTY"/>
<dbReference type="PDBsum" id="5NU2"/>
<dbReference type="PDBsum" id="5NU6"/>
<dbReference type="PDBsum" id="5NU7"/>
<dbReference type="PDBsum" id="5NU8"/>
<dbReference type="PDBsum" id="5NU9"/>
<dbReference type="PDBsum" id="5NUA"/>
<dbReference type="PDBsum" id="5NUB"/>
<dbReference type="PDBsum" id="6QBA"/>
<dbReference type="BMRB" id="P02753"/>
<dbReference type="SMR" id="P02753"/>
<dbReference type="BioGRID" id="111884">
    <property type="interactions" value="26"/>
</dbReference>
<dbReference type="CORUM" id="P02753"/>
<dbReference type="FunCoup" id="P02753">
    <property type="interactions" value="296"/>
</dbReference>
<dbReference type="IntAct" id="P02753">
    <property type="interactions" value="25"/>
</dbReference>
<dbReference type="MINT" id="P02753"/>
<dbReference type="STRING" id="9606.ENSP00000360522"/>
<dbReference type="BindingDB" id="P02753"/>
<dbReference type="ChEMBL" id="CHEMBL3100"/>
<dbReference type="DrugBank" id="DB06985">
    <property type="generic name" value="2-[({4-[2-(trifluoromethyl)phenyl]piperidin-1-yl}carbonyl)amino]benzoic acid"/>
</dbReference>
<dbReference type="DrugBank" id="DB06755">
    <property type="generic name" value="Beta carotene"/>
</dbReference>
<dbReference type="DrugBank" id="DB05076">
    <property type="generic name" value="Fenretinide"/>
</dbReference>
<dbReference type="DrugBank" id="DB03917">
    <property type="generic name" value="N-Ethylretinamide"/>
</dbReference>
<dbReference type="DrugBank" id="DB17832">
    <property type="generic name" value="Tinlarebant"/>
</dbReference>
<dbReference type="DrugBank" id="DB00755">
    <property type="generic name" value="Tretinoin"/>
</dbReference>
<dbReference type="DrugBank" id="DB00162">
    <property type="generic name" value="Vitamin A"/>
</dbReference>
<dbReference type="DrugCentral" id="P02753"/>
<dbReference type="GuidetoPHARMACOLOGY" id="2549"/>
<dbReference type="TCDB" id="8.A.180.1.1">
    <property type="family name" value="the retinol-binding protein (rbp) family"/>
</dbReference>
<dbReference type="iPTMnet" id="P02753"/>
<dbReference type="PhosphoSitePlus" id="P02753"/>
<dbReference type="BioMuta" id="RBP4"/>
<dbReference type="DMDM" id="62298174"/>
<dbReference type="CPTAC" id="non-CPTAC-1156"/>
<dbReference type="jPOST" id="P02753"/>
<dbReference type="MassIVE" id="P02753"/>
<dbReference type="PaxDb" id="9606-ENSP00000360522"/>
<dbReference type="PeptideAtlas" id="P02753"/>
<dbReference type="ProteomicsDB" id="51582"/>
<dbReference type="Pumba" id="P02753"/>
<dbReference type="ABCD" id="P02753">
    <property type="antibodies" value="1 sequenced antibody"/>
</dbReference>
<dbReference type="Antibodypedia" id="885">
    <property type="antibodies" value="1499 antibodies from 45 providers"/>
</dbReference>
<dbReference type="DNASU" id="5950"/>
<dbReference type="Ensembl" id="ENST00000371464.8">
    <property type="protein sequence ID" value="ENSP00000360519.3"/>
    <property type="gene ID" value="ENSG00000138207.15"/>
</dbReference>
<dbReference type="Ensembl" id="ENST00000371467.5">
    <property type="protein sequence ID" value="ENSP00000360522.1"/>
    <property type="gene ID" value="ENSG00000138207.15"/>
</dbReference>
<dbReference type="GeneID" id="5950"/>
<dbReference type="KEGG" id="hsa:5950"/>
<dbReference type="MANE-Select" id="ENST00000371464.8">
    <property type="protein sequence ID" value="ENSP00000360519.3"/>
    <property type="RefSeq nucleotide sequence ID" value="NM_006744.4"/>
    <property type="RefSeq protein sequence ID" value="NP_006735.2"/>
</dbReference>
<dbReference type="UCSC" id="uc001kit.4">
    <property type="organism name" value="human"/>
</dbReference>
<dbReference type="AGR" id="HGNC:9922"/>
<dbReference type="CTD" id="5950"/>
<dbReference type="DisGeNET" id="5950"/>
<dbReference type="GeneCards" id="RBP4"/>
<dbReference type="HGNC" id="HGNC:9922">
    <property type="gene designation" value="RBP4"/>
</dbReference>
<dbReference type="HPA" id="ENSG00000138207">
    <property type="expression patterns" value="Tissue enriched (liver)"/>
</dbReference>
<dbReference type="MalaCards" id="RBP4"/>
<dbReference type="MIM" id="180250">
    <property type="type" value="gene"/>
</dbReference>
<dbReference type="MIM" id="615147">
    <property type="type" value="phenotype"/>
</dbReference>
<dbReference type="MIM" id="616428">
    <property type="type" value="phenotype"/>
</dbReference>
<dbReference type="neXtProt" id="NX_P02753"/>
<dbReference type="OpenTargets" id="ENSG00000138207"/>
<dbReference type="Orphanet" id="98938">
    <property type="disease" value="Colobomatous microphthalmia"/>
</dbReference>
<dbReference type="Orphanet" id="352718">
    <property type="disease" value="Progressive retinal dystrophy due to retinol transport defect"/>
</dbReference>
<dbReference type="PharmGKB" id="PA34289"/>
<dbReference type="VEuPathDB" id="HostDB:ENSG00000138207"/>
<dbReference type="eggNOG" id="ENOG502RXEW">
    <property type="taxonomic scope" value="Eukaryota"/>
</dbReference>
<dbReference type="GeneTree" id="ENSGT00510000047107"/>
<dbReference type="HOGENOM" id="CLU_094618_0_0_1"/>
<dbReference type="InParanoid" id="P02753"/>
<dbReference type="OMA" id="KYWGMAS"/>
<dbReference type="OrthoDB" id="9923952at2759"/>
<dbReference type="PAN-GO" id="P02753">
    <property type="GO annotations" value="3 GO annotations based on evolutionary models"/>
</dbReference>
<dbReference type="PhylomeDB" id="P02753"/>
<dbReference type="TreeFam" id="TF331445"/>
<dbReference type="BioCyc" id="MetaCyc:ENSG00000138207-MONOMER"/>
<dbReference type="PathwayCommons" id="P02753"/>
<dbReference type="Reactome" id="R-HSA-2453902">
    <property type="pathway name" value="The canonical retinoid cycle in rods (twilight vision)"/>
</dbReference>
<dbReference type="Reactome" id="R-HSA-6809583">
    <property type="pathway name" value="Retinoid metabolism disease events"/>
</dbReference>
<dbReference type="Reactome" id="R-HSA-975634">
    <property type="pathway name" value="Retinoid metabolism and transport"/>
</dbReference>
<dbReference type="Reactome" id="R-HSA-9918449">
    <property type="pathway name" value="Defective visual phototransduction due to STRA6 loss of function"/>
</dbReference>
<dbReference type="SignaLink" id="P02753"/>
<dbReference type="SIGNOR" id="P02753"/>
<dbReference type="BioGRID-ORCS" id="5950">
    <property type="hits" value="8 hits in 1147 CRISPR screens"/>
</dbReference>
<dbReference type="ChiTaRS" id="RBP4">
    <property type="organism name" value="human"/>
</dbReference>
<dbReference type="EvolutionaryTrace" id="P02753"/>
<dbReference type="GeneWiki" id="Retinol_binding_protein_4"/>
<dbReference type="GenomeRNAi" id="5950"/>
<dbReference type="Pharos" id="P02753">
    <property type="development level" value="Tchem"/>
</dbReference>
<dbReference type="PRO" id="PR:P02753"/>
<dbReference type="Proteomes" id="UP000005640">
    <property type="component" value="Chromosome 10"/>
</dbReference>
<dbReference type="RNAct" id="P02753">
    <property type="molecule type" value="protein"/>
</dbReference>
<dbReference type="Bgee" id="ENSG00000138207">
    <property type="expression patterns" value="Expressed in right lobe of liver and 167 other cell types or tissues"/>
</dbReference>
<dbReference type="ExpressionAtlas" id="P02753">
    <property type="expression patterns" value="baseline and differential"/>
</dbReference>
<dbReference type="GO" id="GO:0070062">
    <property type="term" value="C:extracellular exosome"/>
    <property type="evidence" value="ECO:0007005"/>
    <property type="project" value="UniProtKB"/>
</dbReference>
<dbReference type="GO" id="GO:0005576">
    <property type="term" value="C:extracellular region"/>
    <property type="evidence" value="ECO:0000304"/>
    <property type="project" value="Reactome"/>
</dbReference>
<dbReference type="GO" id="GO:0005615">
    <property type="term" value="C:extracellular space"/>
    <property type="evidence" value="ECO:0000314"/>
    <property type="project" value="UniProtKB"/>
</dbReference>
<dbReference type="GO" id="GO:0032991">
    <property type="term" value="C:protein-containing complex"/>
    <property type="evidence" value="ECO:0007669"/>
    <property type="project" value="Ensembl"/>
</dbReference>
<dbReference type="GO" id="GO:0140104">
    <property type="term" value="F:molecular carrier activity"/>
    <property type="evidence" value="ECO:0007669"/>
    <property type="project" value="Ensembl"/>
</dbReference>
<dbReference type="GO" id="GO:0044877">
    <property type="term" value="F:protein-containing complex binding"/>
    <property type="evidence" value="ECO:0007669"/>
    <property type="project" value="Ensembl"/>
</dbReference>
<dbReference type="GO" id="GO:0016918">
    <property type="term" value="F:retinal binding"/>
    <property type="evidence" value="ECO:0007669"/>
    <property type="project" value="UniProtKB-KW"/>
</dbReference>
<dbReference type="GO" id="GO:0019841">
    <property type="term" value="F:retinol binding"/>
    <property type="evidence" value="ECO:0000314"/>
    <property type="project" value="BHF-UCL"/>
</dbReference>
<dbReference type="GO" id="GO:0034632">
    <property type="term" value="F:retinol transmembrane transporter activity"/>
    <property type="evidence" value="ECO:0000305"/>
    <property type="project" value="BHF-UCL"/>
</dbReference>
<dbReference type="GO" id="GO:0048738">
    <property type="term" value="P:cardiac muscle tissue development"/>
    <property type="evidence" value="ECO:0000250"/>
    <property type="project" value="BHF-UCL"/>
</dbReference>
<dbReference type="GO" id="GO:0050908">
    <property type="term" value="P:detection of light stimulus involved in visual perception"/>
    <property type="evidence" value="ECO:0007669"/>
    <property type="project" value="Ensembl"/>
</dbReference>
<dbReference type="GO" id="GO:0048562">
    <property type="term" value="P:embryonic organ morphogenesis"/>
    <property type="evidence" value="ECO:0000250"/>
    <property type="project" value="BHF-UCL"/>
</dbReference>
<dbReference type="GO" id="GO:0060059">
    <property type="term" value="P:embryonic retina morphogenesis in camera-type eye"/>
    <property type="evidence" value="ECO:0000250"/>
    <property type="project" value="BHF-UCL"/>
</dbReference>
<dbReference type="GO" id="GO:0048706">
    <property type="term" value="P:embryonic skeletal system development"/>
    <property type="evidence" value="ECO:0000250"/>
    <property type="project" value="BHF-UCL"/>
</dbReference>
<dbReference type="GO" id="GO:0001654">
    <property type="term" value="P:eye development"/>
    <property type="evidence" value="ECO:0000315"/>
    <property type="project" value="BHF-UCL"/>
</dbReference>
<dbReference type="GO" id="GO:0048807">
    <property type="term" value="P:female genitalia morphogenesis"/>
    <property type="evidence" value="ECO:0000250"/>
    <property type="project" value="BHF-UCL"/>
</dbReference>
<dbReference type="GO" id="GO:0006094">
    <property type="term" value="P:gluconeogenesis"/>
    <property type="evidence" value="ECO:0000315"/>
    <property type="project" value="BHF-UCL"/>
</dbReference>
<dbReference type="GO" id="GO:0042593">
    <property type="term" value="P:glucose homeostasis"/>
    <property type="evidence" value="ECO:0000314"/>
    <property type="project" value="BHF-UCL"/>
</dbReference>
<dbReference type="GO" id="GO:0007507">
    <property type="term" value="P:heart development"/>
    <property type="evidence" value="ECO:0000250"/>
    <property type="project" value="BHF-UCL"/>
</dbReference>
<dbReference type="GO" id="GO:0060347">
    <property type="term" value="P:heart trabecula formation"/>
    <property type="evidence" value="ECO:0000250"/>
    <property type="project" value="BHF-UCL"/>
</dbReference>
<dbReference type="GO" id="GO:0030324">
    <property type="term" value="P:lung development"/>
    <property type="evidence" value="ECO:0000250"/>
    <property type="project" value="BHF-UCL"/>
</dbReference>
<dbReference type="GO" id="GO:0030277">
    <property type="term" value="P:maintenance of gastrointestinal epithelium"/>
    <property type="evidence" value="ECO:0000314"/>
    <property type="project" value="BHF-UCL"/>
</dbReference>
<dbReference type="GO" id="GO:0008584">
    <property type="term" value="P:male gonad development"/>
    <property type="evidence" value="ECO:0007669"/>
    <property type="project" value="Ensembl"/>
</dbReference>
<dbReference type="GO" id="GO:0060044">
    <property type="term" value="P:negative regulation of cardiac muscle cell proliferation"/>
    <property type="evidence" value="ECO:0000250"/>
    <property type="project" value="BHF-UCL"/>
</dbReference>
<dbReference type="GO" id="GO:0007603">
    <property type="term" value="P:phototransduction, visible light"/>
    <property type="evidence" value="ECO:0007669"/>
    <property type="project" value="Ensembl"/>
</dbReference>
<dbReference type="GO" id="GO:0002639">
    <property type="term" value="P:positive regulation of immunoglobulin production"/>
    <property type="evidence" value="ECO:0000250"/>
    <property type="project" value="BHF-UCL"/>
</dbReference>
<dbReference type="GO" id="GO:0032024">
    <property type="term" value="P:positive regulation of insulin secretion"/>
    <property type="evidence" value="ECO:0000315"/>
    <property type="project" value="BHF-UCL"/>
</dbReference>
<dbReference type="GO" id="GO:0045471">
    <property type="term" value="P:response to ethanol"/>
    <property type="evidence" value="ECO:0007669"/>
    <property type="project" value="Ensembl"/>
</dbReference>
<dbReference type="GO" id="GO:0032868">
    <property type="term" value="P:response to insulin"/>
    <property type="evidence" value="ECO:0007669"/>
    <property type="project" value="Ensembl"/>
</dbReference>
<dbReference type="GO" id="GO:0014850">
    <property type="term" value="P:response to muscle activity"/>
    <property type="evidence" value="ECO:0007669"/>
    <property type="project" value="Ensembl"/>
</dbReference>
<dbReference type="GO" id="GO:0032526">
    <property type="term" value="P:response to retinoic acid"/>
    <property type="evidence" value="ECO:0000314"/>
    <property type="project" value="BHF-UCL"/>
</dbReference>
<dbReference type="GO" id="GO:0009410">
    <property type="term" value="P:response to xenobiotic stimulus"/>
    <property type="evidence" value="ECO:0007669"/>
    <property type="project" value="Ensembl"/>
</dbReference>
<dbReference type="GO" id="GO:0042574">
    <property type="term" value="P:retinal metabolic process"/>
    <property type="evidence" value="ECO:0007669"/>
    <property type="project" value="Ensembl"/>
</dbReference>
<dbReference type="GO" id="GO:0042572">
    <property type="term" value="P:retinol metabolic process"/>
    <property type="evidence" value="ECO:0000315"/>
    <property type="project" value="BHF-UCL"/>
</dbReference>
<dbReference type="GO" id="GO:0034633">
    <property type="term" value="P:retinol transport"/>
    <property type="evidence" value="ECO:0000318"/>
    <property type="project" value="GO_Central"/>
</dbReference>
<dbReference type="GO" id="GO:0007283">
    <property type="term" value="P:spermatogenesis"/>
    <property type="evidence" value="ECO:0007669"/>
    <property type="project" value="Ensembl"/>
</dbReference>
<dbReference type="GO" id="GO:0060157">
    <property type="term" value="P:urinary bladder development"/>
    <property type="evidence" value="ECO:0000250"/>
    <property type="project" value="BHF-UCL"/>
</dbReference>
<dbReference type="GO" id="GO:0060065">
    <property type="term" value="P:uterus development"/>
    <property type="evidence" value="ECO:0000250"/>
    <property type="project" value="BHF-UCL"/>
</dbReference>
<dbReference type="GO" id="GO:0060068">
    <property type="term" value="P:vagina development"/>
    <property type="evidence" value="ECO:0000250"/>
    <property type="project" value="BHF-UCL"/>
</dbReference>
<dbReference type="GO" id="GO:0071939">
    <property type="term" value="P:vitamin A import into cell"/>
    <property type="evidence" value="ECO:0007669"/>
    <property type="project" value="Ensembl"/>
</dbReference>
<dbReference type="CDD" id="cd00743">
    <property type="entry name" value="lipocalin_RBP_like"/>
    <property type="match status" value="1"/>
</dbReference>
<dbReference type="FunFam" id="2.40.128.20:FF:000004">
    <property type="entry name" value="Retinol-binding protein 4"/>
    <property type="match status" value="1"/>
</dbReference>
<dbReference type="Gene3D" id="2.40.128.20">
    <property type="match status" value="1"/>
</dbReference>
<dbReference type="InterPro" id="IPR012674">
    <property type="entry name" value="Calycin"/>
</dbReference>
<dbReference type="InterPro" id="IPR022271">
    <property type="entry name" value="Lipocalin_ApoD"/>
</dbReference>
<dbReference type="InterPro" id="IPR022272">
    <property type="entry name" value="Lipocalin_CS"/>
</dbReference>
<dbReference type="InterPro" id="IPR000566">
    <property type="entry name" value="Lipocln_cytosolic_FA-bd_dom"/>
</dbReference>
<dbReference type="InterPro" id="IPR002449">
    <property type="entry name" value="Retinol-bd/Purpurin"/>
</dbReference>
<dbReference type="PANTHER" id="PTHR11873">
    <property type="entry name" value="RETINOL-BINDING PROTEIN 4"/>
    <property type="match status" value="1"/>
</dbReference>
<dbReference type="PANTHER" id="PTHR11873:SF2">
    <property type="entry name" value="RETINOL-BINDING PROTEIN 4"/>
    <property type="match status" value="1"/>
</dbReference>
<dbReference type="Pfam" id="PF00061">
    <property type="entry name" value="Lipocalin"/>
    <property type="match status" value="1"/>
</dbReference>
<dbReference type="PIRSF" id="PIRSF036893">
    <property type="entry name" value="Lipocalin_ApoD"/>
    <property type="match status" value="1"/>
</dbReference>
<dbReference type="PIRSF" id="PIRSF500204">
    <property type="entry name" value="RBP_purpurin"/>
    <property type="match status" value="1"/>
</dbReference>
<dbReference type="PRINTS" id="PR00179">
    <property type="entry name" value="LIPOCALIN"/>
</dbReference>
<dbReference type="PRINTS" id="PR01174">
    <property type="entry name" value="RETINOLBNDNG"/>
</dbReference>
<dbReference type="SUPFAM" id="SSF50814">
    <property type="entry name" value="Lipocalins"/>
    <property type="match status" value="1"/>
</dbReference>
<dbReference type="PROSITE" id="PS00213">
    <property type="entry name" value="LIPOCALIN"/>
    <property type="match status" value="1"/>
</dbReference>
<proteinExistence type="evidence at protein level"/>
<organism>
    <name type="scientific">Homo sapiens</name>
    <name type="common">Human</name>
    <dbReference type="NCBI Taxonomy" id="9606"/>
    <lineage>
        <taxon>Eukaryota</taxon>
        <taxon>Metazoa</taxon>
        <taxon>Chordata</taxon>
        <taxon>Craniata</taxon>
        <taxon>Vertebrata</taxon>
        <taxon>Euteleostomi</taxon>
        <taxon>Mammalia</taxon>
        <taxon>Eutheria</taxon>
        <taxon>Euarchontoglires</taxon>
        <taxon>Primates</taxon>
        <taxon>Haplorrhini</taxon>
        <taxon>Catarrhini</taxon>
        <taxon>Hominidae</taxon>
        <taxon>Homo</taxon>
    </lineage>
</organism>
<gene>
    <name type="primary">RBP4</name>
    <name type="ORF">PRO2222</name>
</gene>
<keyword id="KW-0002">3D-structure</keyword>
<keyword id="KW-0903">Direct protein sequencing</keyword>
<keyword id="KW-0225">Disease variant</keyword>
<keyword id="KW-1015">Disulfide bond</keyword>
<keyword id="KW-0488">Methylation</keyword>
<keyword id="KW-1013">Microphthalmia</keyword>
<keyword id="KW-1267">Proteomics identification</keyword>
<keyword id="KW-1185">Reference proteome</keyword>
<keyword id="KW-0683">Retinol-binding</keyword>
<keyword id="KW-0964">Secreted</keyword>
<keyword id="KW-0716">Sensory transduction</keyword>
<keyword id="KW-0732">Signal</keyword>
<keyword id="KW-0813">Transport</keyword>
<keyword id="KW-0844">Vision</keyword>
<keyword id="KW-0845">Vitamin A</keyword>
<comment type="function">
    <text evidence="7 17 18">Retinol-binding protein that mediates retinol transport in blood plasma (PubMed:5541771). Delivers retinol from the liver stores to the peripheral tissues (Probable). Transfers the bound all-trans retinol to STRA6, that then facilitates retinol transport across the cell membrane (PubMed:22665496).</text>
</comment>
<comment type="subunit">
    <text evidence="3 6 7 10 11 15 17">Interacts with TTR (PubMed:10052934, PubMed:19021760, PubMed:5541771, PubMed:7754382). Interaction with TTR prevents its loss by filtration through the kidney glomeruli (Probable). Interacts with STRA6 (PubMed:22665496, PubMed:25910211).</text>
</comment>
<comment type="interaction">
    <interactant intactId="EBI-2116134">
        <id>P02753</id>
    </interactant>
    <interactant intactId="EBI-8470369">
        <id>Q9UBX0</id>
        <label>HESX1</label>
    </interactant>
    <organismsDiffer>false</organismsDiffer>
    <experiments>2</experiments>
</comment>
<comment type="interaction">
    <interactant intactId="EBI-2116134">
        <id>P02753</id>
    </interactant>
    <interactant intactId="EBI-711909">
        <id>P02766</id>
        <label>TTR</label>
    </interactant>
    <organismsDiffer>false</organismsDiffer>
    <experiments>4</experiments>
</comment>
<comment type="interaction">
    <interactant intactId="EBI-2116134">
        <id>P02753</id>
    </interactant>
    <interactant intactId="EBI-7038226">
        <id>O55245</id>
        <label>TTR</label>
    </interactant>
    <organismsDiffer>true</organismsDiffer>
    <experiments>2</experiments>
</comment>
<comment type="subcellular location">
    <subcellularLocation>
        <location evidence="5 9 11">Secreted</location>
    </subcellularLocation>
</comment>
<comment type="tissue specificity">
    <text evidence="9 11">Detected in blood plasma and in urine (at protein level).</text>
</comment>
<comment type="mass spectrometry">
    <molecule>Plasma retinol-binding protein(1-181)</molecule>
</comment>
<comment type="mass spectrometry">
    <molecule>Plasma retinol-binding protein(1-179)</molecule>
</comment>
<comment type="mass spectrometry">
    <molecule>Plasma retinol-binding protein(1-181)</molecule>
</comment>
<comment type="disease" evidence="4 8 16">
    <disease id="DI-02265">
        <name>Retinal dystrophy, iris coloboma, and comedogenic acne syndrome</name>
        <acronym>RDCCAS</acronym>
        <description>A disease characterized by retinal degeneration, ocular colobomas involving both the anterior and posterior segment, impaired night vision and loss of visual acuity. Additional characteristic features include developmental abnormalities and severe acne.</description>
        <dbReference type="MIM" id="615147"/>
    </disease>
    <text evidence="8">The disease is caused by variants affecting the gene represented in this entry. Loss of functional RBP4 protein results in serum retinol deficiency. Lack of normal levels of retinol impairs the visual cycle leading to night blindness at early stages; prolonged deficiency may lead to retinal degeneration. Additionally, retinol deficiency may result in dry skin, increased susceptibility to infection and acne (PubMed:23189188).</text>
</comment>
<comment type="disease" evidence="10">
    <disease id="DI-04459">
        <name>Microphthalmia/Coloboma 10</name>
        <acronym>MCOPCB10</acronym>
        <description>A disorder of eye formation, ranging from small size of a single eye to complete bilateral absence of ocular tissues. Ocular abnormalities like opacities of the cornea and lens, scaring of the retina and choroid, and other abnormalities may also be present. Ocular colobomas are a set of malformations resulting from abnormal morphogenesis of the optic cup and stalk, and the fusion of the fetal fissure (optic fissure).</description>
        <dbReference type="MIM" id="616428"/>
    </disease>
    <text>The disease is caused by variants affecting the gene represented in this entry.</text>
</comment>
<comment type="similarity">
    <text evidence="17">Belongs to the calycin superfamily. Lipocalin family.</text>
</comment>
<comment type="sequence caution" evidence="17">
    <conflict type="erroneous initiation">
        <sequence resource="EMBL-CDS" id="AAF69622"/>
    </conflict>
    <text>Truncated N-terminus.</text>
</comment>
<comment type="online information" name="Wikipedia">
    <link uri="https://en.wikipedia.org/wiki/Retinol_binding_protein_4"/>
    <text>Retinol-binding protein 4 entry</text>
</comment>